<accession>Q15620</accession>
<accession>A1L446</accession>
<accession>Q96RC8</accession>
<organism>
    <name type="scientific">Homo sapiens</name>
    <name type="common">Human</name>
    <dbReference type="NCBI Taxonomy" id="9606"/>
    <lineage>
        <taxon>Eukaryota</taxon>
        <taxon>Metazoa</taxon>
        <taxon>Chordata</taxon>
        <taxon>Craniata</taxon>
        <taxon>Vertebrata</taxon>
        <taxon>Euteleostomi</taxon>
        <taxon>Mammalia</taxon>
        <taxon>Eutheria</taxon>
        <taxon>Euarchontoglires</taxon>
        <taxon>Primates</taxon>
        <taxon>Haplorrhini</taxon>
        <taxon>Catarrhini</taxon>
        <taxon>Hominidae</taxon>
        <taxon>Homo</taxon>
    </lineage>
</organism>
<dbReference type="EMBL" id="AF238488">
    <property type="protein sequence ID" value="AAL32997.1"/>
    <property type="molecule type" value="mRNA"/>
</dbReference>
<dbReference type="EMBL" id="AB065832">
    <property type="protein sequence ID" value="BAC06051.1"/>
    <property type="molecule type" value="Genomic_DNA"/>
</dbReference>
<dbReference type="EMBL" id="CH471065">
    <property type="protein sequence ID" value="EAW67583.1"/>
    <property type="molecule type" value="Genomic_DNA"/>
</dbReference>
<dbReference type="EMBL" id="BC130393">
    <property type="protein sequence ID" value="AAI30394.1"/>
    <property type="molecule type" value="mRNA"/>
</dbReference>
<dbReference type="EMBL" id="BC130419">
    <property type="protein sequence ID" value="AAI30420.1"/>
    <property type="molecule type" value="mRNA"/>
</dbReference>
<dbReference type="EMBL" id="AF399510">
    <property type="protein sequence ID" value="AAK94995.1"/>
    <property type="molecule type" value="Genomic_DNA"/>
</dbReference>
<dbReference type="EMBL" id="X89675">
    <property type="protein sequence ID" value="CAA61822.1"/>
    <property type="molecule type" value="mRNA"/>
</dbReference>
<dbReference type="CCDS" id="CCDS8446.1"/>
<dbReference type="PIR" id="S58007">
    <property type="entry name" value="S58007"/>
</dbReference>
<dbReference type="RefSeq" id="NP_036510.1">
    <property type="nucleotide sequence ID" value="NM_012378.2"/>
</dbReference>
<dbReference type="SMR" id="Q15620"/>
<dbReference type="BioGRID" id="117703">
    <property type="interactions" value="3"/>
</dbReference>
<dbReference type="FunCoup" id="Q15620">
    <property type="interactions" value="418"/>
</dbReference>
<dbReference type="IntAct" id="Q15620">
    <property type="interactions" value="3"/>
</dbReference>
<dbReference type="STRING" id="9606.ENSP00000493014"/>
<dbReference type="GlyCosmos" id="Q15620">
    <property type="glycosylation" value="1 site, No reported glycans"/>
</dbReference>
<dbReference type="GlyGen" id="Q15620">
    <property type="glycosylation" value="1 site"/>
</dbReference>
<dbReference type="BioMuta" id="OR8B8"/>
<dbReference type="DMDM" id="14423794"/>
<dbReference type="MassIVE" id="Q15620"/>
<dbReference type="PaxDb" id="9606-ENSP00000330280"/>
<dbReference type="Antibodypedia" id="53986">
    <property type="antibodies" value="68 antibodies from 19 providers"/>
</dbReference>
<dbReference type="DNASU" id="26493"/>
<dbReference type="Ensembl" id="ENST00000328064.2">
    <property type="protein sequence ID" value="ENSP00000330280.2"/>
    <property type="gene ID" value="ENSG00000197125.3"/>
</dbReference>
<dbReference type="Ensembl" id="ENST00000642064.1">
    <property type="protein sequence ID" value="ENSP00000493014.1"/>
    <property type="gene ID" value="ENSG00000197125.3"/>
</dbReference>
<dbReference type="GeneID" id="26493"/>
<dbReference type="KEGG" id="hsa:26493"/>
<dbReference type="MANE-Select" id="ENST00000642064.1">
    <property type="protein sequence ID" value="ENSP00000493014.1"/>
    <property type="RefSeq nucleotide sequence ID" value="NM_012378.2"/>
    <property type="RefSeq protein sequence ID" value="NP_036510.1"/>
</dbReference>
<dbReference type="UCSC" id="uc010sal.3">
    <property type="organism name" value="human"/>
</dbReference>
<dbReference type="AGR" id="HGNC:8477"/>
<dbReference type="CTD" id="26493"/>
<dbReference type="DisGeNET" id="26493"/>
<dbReference type="GeneCards" id="OR8B8"/>
<dbReference type="HGNC" id="HGNC:8477">
    <property type="gene designation" value="OR8B8"/>
</dbReference>
<dbReference type="HPA" id="ENSG00000197125">
    <property type="expression patterns" value="Not detected"/>
</dbReference>
<dbReference type="neXtProt" id="NX_Q15620"/>
<dbReference type="OpenTargets" id="ENSG00000197125"/>
<dbReference type="PharmGKB" id="PA32756"/>
<dbReference type="VEuPathDB" id="HostDB:ENSG00000197125"/>
<dbReference type="eggNOG" id="ENOG502QVH7">
    <property type="taxonomic scope" value="Eukaryota"/>
</dbReference>
<dbReference type="GeneTree" id="ENSGT01010000222320"/>
<dbReference type="HOGENOM" id="CLU_012526_1_0_1"/>
<dbReference type="InParanoid" id="Q15620"/>
<dbReference type="OMA" id="CNPLVYM"/>
<dbReference type="OrthoDB" id="9615611at2759"/>
<dbReference type="PAN-GO" id="Q15620">
    <property type="GO annotations" value="4 GO annotations based on evolutionary models"/>
</dbReference>
<dbReference type="PhylomeDB" id="Q15620"/>
<dbReference type="TreeFam" id="TF352753"/>
<dbReference type="PathwayCommons" id="Q15620"/>
<dbReference type="Reactome" id="R-HSA-9752946">
    <property type="pathway name" value="Expression and translocation of olfactory receptors"/>
</dbReference>
<dbReference type="BioGRID-ORCS" id="26493">
    <property type="hits" value="9 hits in 738 CRISPR screens"/>
</dbReference>
<dbReference type="GeneWiki" id="OR8B8"/>
<dbReference type="GenomeRNAi" id="26493"/>
<dbReference type="Pharos" id="Q15620">
    <property type="development level" value="Tdark"/>
</dbReference>
<dbReference type="PRO" id="PR:Q15620"/>
<dbReference type="Proteomes" id="UP000005640">
    <property type="component" value="Chromosome 11"/>
</dbReference>
<dbReference type="RNAct" id="Q15620">
    <property type="molecule type" value="protein"/>
</dbReference>
<dbReference type="Bgee" id="ENSG00000197125">
    <property type="expression patterns" value="Expressed in cardiac atrium and 1 other cell type or tissue"/>
</dbReference>
<dbReference type="ExpressionAtlas" id="Q15620">
    <property type="expression patterns" value="baseline and differential"/>
</dbReference>
<dbReference type="GO" id="GO:0016020">
    <property type="term" value="C:membrane"/>
    <property type="evidence" value="ECO:0000303"/>
    <property type="project" value="UniProtKB"/>
</dbReference>
<dbReference type="GO" id="GO:0005886">
    <property type="term" value="C:plasma membrane"/>
    <property type="evidence" value="ECO:0007669"/>
    <property type="project" value="UniProtKB-SubCell"/>
</dbReference>
<dbReference type="GO" id="GO:0004930">
    <property type="term" value="F:G protein-coupled receptor activity"/>
    <property type="evidence" value="ECO:0007669"/>
    <property type="project" value="UniProtKB-KW"/>
</dbReference>
<dbReference type="GO" id="GO:0005549">
    <property type="term" value="F:odorant binding"/>
    <property type="evidence" value="ECO:0000318"/>
    <property type="project" value="GO_Central"/>
</dbReference>
<dbReference type="GO" id="GO:0004984">
    <property type="term" value="F:olfactory receptor activity"/>
    <property type="evidence" value="ECO:0000318"/>
    <property type="project" value="GO_Central"/>
</dbReference>
<dbReference type="GO" id="GO:0007186">
    <property type="term" value="P:G protein-coupled receptor signaling pathway"/>
    <property type="evidence" value="ECO:0000318"/>
    <property type="project" value="GO_Central"/>
</dbReference>
<dbReference type="GO" id="GO:0007608">
    <property type="term" value="P:sensory perception of smell"/>
    <property type="evidence" value="ECO:0000318"/>
    <property type="project" value="GO_Central"/>
</dbReference>
<dbReference type="CDD" id="cd15405">
    <property type="entry name" value="7tmA_OR8B-like"/>
    <property type="match status" value="1"/>
</dbReference>
<dbReference type="FunFam" id="1.20.1070.10:FF:000646">
    <property type="entry name" value="Olfactory receptor 887"/>
    <property type="match status" value="1"/>
</dbReference>
<dbReference type="FunFam" id="1.20.1070.10:FF:001035">
    <property type="entry name" value="Putative olfactory receptor"/>
    <property type="match status" value="1"/>
</dbReference>
<dbReference type="Gene3D" id="1.20.1070.10">
    <property type="entry name" value="Rhodopsin 7-helix transmembrane proteins"/>
    <property type="match status" value="1"/>
</dbReference>
<dbReference type="InterPro" id="IPR000276">
    <property type="entry name" value="GPCR_Rhodpsn"/>
</dbReference>
<dbReference type="InterPro" id="IPR017452">
    <property type="entry name" value="GPCR_Rhodpsn_7TM"/>
</dbReference>
<dbReference type="InterPro" id="IPR000725">
    <property type="entry name" value="Olfact_rcpt"/>
</dbReference>
<dbReference type="PANTHER" id="PTHR48018">
    <property type="entry name" value="OLFACTORY RECEPTOR"/>
    <property type="match status" value="1"/>
</dbReference>
<dbReference type="Pfam" id="PF13853">
    <property type="entry name" value="7tm_4"/>
    <property type="match status" value="1"/>
</dbReference>
<dbReference type="PRINTS" id="PR00237">
    <property type="entry name" value="GPCRRHODOPSN"/>
</dbReference>
<dbReference type="PRINTS" id="PR00245">
    <property type="entry name" value="OLFACTORYR"/>
</dbReference>
<dbReference type="SUPFAM" id="SSF81321">
    <property type="entry name" value="Family A G protein-coupled receptor-like"/>
    <property type="match status" value="1"/>
</dbReference>
<dbReference type="PROSITE" id="PS00237">
    <property type="entry name" value="G_PROTEIN_RECEP_F1_1"/>
    <property type="match status" value="1"/>
</dbReference>
<dbReference type="PROSITE" id="PS50262">
    <property type="entry name" value="G_PROTEIN_RECEP_F1_2"/>
    <property type="match status" value="1"/>
</dbReference>
<protein>
    <recommendedName>
        <fullName evidence="3">Olfactory receptor 8B8</fullName>
    </recommendedName>
    <alternativeName>
        <fullName evidence="4">Olfactory receptor TPCR85</fullName>
    </alternativeName>
    <alternativeName>
        <fullName>Olfactory-like receptor JCG8</fullName>
    </alternativeName>
</protein>
<sequence>MAAENSSFVTQFILAGLTDQPGVQIPLFFLFLGFYVVTVVGNLGLITLIRLNSHLHTPMYFFLYNLSFIDFCYSSVITPKMLMSFVLKKNSISYAGCMTQLFFFLFFVVSESFILSAMAYDRYVAICNPLLYMVTMSPQVCFLLLLGVYGMGFAGAMAHTACMMGVTFCANNLVNHYMCDILPLLECACTSTYVNELVVFVVVGIDIGVPTVTIFISYALILSSIFHIDSTEGRSKAFSTCSSHIIAVSLFFGSGAFMYLKPFSLLAMNQGKVSSLFYTTVVPMLNPLIYSLRNKDVKVALKKILNKNAFS</sequence>
<reference key="1">
    <citation type="journal article" date="2001" name="Chem. Senses">
        <title>New GPCRs from a human lingual cDNA library.</title>
        <authorList>
            <person name="Gaudin J.-C."/>
            <person name="Breuils L."/>
            <person name="Haertle T."/>
        </authorList>
    </citation>
    <scope>NUCLEOTIDE SEQUENCE [MRNA]</scope>
    <source>
        <tissue>Tongue</tissue>
    </source>
</reference>
<reference key="2">
    <citation type="submission" date="2001-07" db="EMBL/GenBank/DDBJ databases">
        <title>Genome-wide discovery and analysis of human seven transmembrane helix receptor genes.</title>
        <authorList>
            <person name="Suwa M."/>
            <person name="Sato T."/>
            <person name="Okouchi I."/>
            <person name="Arita M."/>
            <person name="Futami K."/>
            <person name="Matsumoto S."/>
            <person name="Tsutsumi S."/>
            <person name="Aburatani H."/>
            <person name="Asai K."/>
            <person name="Akiyama Y."/>
        </authorList>
    </citation>
    <scope>NUCLEOTIDE SEQUENCE [GENOMIC DNA]</scope>
</reference>
<reference key="3">
    <citation type="submission" date="2005-07" db="EMBL/GenBank/DDBJ databases">
        <authorList>
            <person name="Mural R.J."/>
            <person name="Istrail S."/>
            <person name="Sutton G.G."/>
            <person name="Florea L."/>
            <person name="Halpern A.L."/>
            <person name="Mobarry C.M."/>
            <person name="Lippert R."/>
            <person name="Walenz B."/>
            <person name="Shatkay H."/>
            <person name="Dew I."/>
            <person name="Miller J.R."/>
            <person name="Flanigan M.J."/>
            <person name="Edwards N.J."/>
            <person name="Bolanos R."/>
            <person name="Fasulo D."/>
            <person name="Halldorsson B.V."/>
            <person name="Hannenhalli S."/>
            <person name="Turner R."/>
            <person name="Yooseph S."/>
            <person name="Lu F."/>
            <person name="Nusskern D.R."/>
            <person name="Shue B.C."/>
            <person name="Zheng X.H."/>
            <person name="Zhong F."/>
            <person name="Delcher A.L."/>
            <person name="Huson D.H."/>
            <person name="Kravitz S.A."/>
            <person name="Mouchard L."/>
            <person name="Reinert K."/>
            <person name="Remington K.A."/>
            <person name="Clark A.G."/>
            <person name="Waterman M.S."/>
            <person name="Eichler E.E."/>
            <person name="Adams M.D."/>
            <person name="Hunkapiller M.W."/>
            <person name="Myers E.W."/>
            <person name="Venter J.C."/>
        </authorList>
    </citation>
    <scope>NUCLEOTIDE SEQUENCE [LARGE SCALE GENOMIC DNA]</scope>
</reference>
<reference key="4">
    <citation type="journal article" date="2004" name="Genome Res.">
        <title>The status, quality, and expansion of the NIH full-length cDNA project: the Mammalian Gene Collection (MGC).</title>
        <authorList>
            <consortium name="The MGC Project Team"/>
        </authorList>
    </citation>
    <scope>NUCLEOTIDE SEQUENCE [LARGE SCALE MRNA]</scope>
    <source>
        <tissue>Brain</tissue>
    </source>
</reference>
<reference key="5">
    <citation type="journal article" date="2002" name="Genomics">
        <title>DEFOG: a practical scheme for deciphering families of genes.</title>
        <authorList>
            <person name="Fuchs T."/>
            <person name="Malecova B."/>
            <person name="Linhart C."/>
            <person name="Sharan R."/>
            <person name="Khen M."/>
            <person name="Herwig R."/>
            <person name="Shmulevich D."/>
            <person name="Elkon R."/>
            <person name="Steinfath M."/>
            <person name="O'Brien J.K."/>
            <person name="Radelof U."/>
            <person name="Lehrach H."/>
            <person name="Lancet D."/>
            <person name="Shamir R."/>
        </authorList>
    </citation>
    <scope>NUCLEOTIDE SEQUENCE [GENOMIC DNA] OF 68-283</scope>
</reference>
<reference key="6">
    <citation type="journal article" date="1997" name="Genomics">
        <title>Specific repertoire of olfactory receptor genes in the male germ cells of several mammalian species.</title>
        <authorList>
            <person name="Vanderhaeghen P."/>
            <person name="Schurmans S."/>
            <person name="Vassart G."/>
            <person name="Parmentier M."/>
        </authorList>
    </citation>
    <scope>NUCLEOTIDE SEQUENCE [MRNA] OF 126-282</scope>
    <source>
        <tissue>Testis</tissue>
    </source>
</reference>
<keyword id="KW-1003">Cell membrane</keyword>
<keyword id="KW-1015">Disulfide bond</keyword>
<keyword id="KW-0297">G-protein coupled receptor</keyword>
<keyword id="KW-0325">Glycoprotein</keyword>
<keyword id="KW-0472">Membrane</keyword>
<keyword id="KW-0552">Olfaction</keyword>
<keyword id="KW-0675">Receptor</keyword>
<keyword id="KW-1185">Reference proteome</keyword>
<keyword id="KW-0716">Sensory transduction</keyword>
<keyword id="KW-0807">Transducer</keyword>
<keyword id="KW-0812">Transmembrane</keyword>
<keyword id="KW-1133">Transmembrane helix</keyword>
<evidence type="ECO:0000255" key="1"/>
<evidence type="ECO:0000255" key="2">
    <source>
        <dbReference type="PROSITE-ProRule" id="PRU00521"/>
    </source>
</evidence>
<evidence type="ECO:0000305" key="3"/>
<evidence type="ECO:0000312" key="4">
    <source>
        <dbReference type="HGNC" id="HGNC:8477"/>
    </source>
</evidence>
<gene>
    <name evidence="4" type="primary">OR8B8</name>
</gene>
<name>OR8B8_HUMAN</name>
<feature type="chain" id="PRO_0000150657" description="Olfactory receptor 8B8">
    <location>
        <begin position="1"/>
        <end position="311"/>
    </location>
</feature>
<feature type="topological domain" description="Extracellular" evidence="1">
    <location>
        <begin position="1"/>
        <end position="25"/>
    </location>
</feature>
<feature type="transmembrane region" description="Helical; Name=1" evidence="1">
    <location>
        <begin position="26"/>
        <end position="46"/>
    </location>
</feature>
<feature type="topological domain" description="Cytoplasmic" evidence="1">
    <location>
        <begin position="47"/>
        <end position="54"/>
    </location>
</feature>
<feature type="transmembrane region" description="Helical; Name=2" evidence="1">
    <location>
        <begin position="55"/>
        <end position="75"/>
    </location>
</feature>
<feature type="topological domain" description="Extracellular" evidence="1">
    <location>
        <begin position="76"/>
        <end position="99"/>
    </location>
</feature>
<feature type="transmembrane region" description="Helical; Name=3" evidence="1">
    <location>
        <begin position="100"/>
        <end position="120"/>
    </location>
</feature>
<feature type="topological domain" description="Cytoplasmic" evidence="1">
    <location>
        <begin position="121"/>
        <end position="139"/>
    </location>
</feature>
<feature type="transmembrane region" description="Helical; Name=4" evidence="1">
    <location>
        <begin position="140"/>
        <end position="160"/>
    </location>
</feature>
<feature type="topological domain" description="Extracellular" evidence="1">
    <location>
        <begin position="161"/>
        <end position="197"/>
    </location>
</feature>
<feature type="transmembrane region" description="Helical; Name=5" evidence="1">
    <location>
        <begin position="198"/>
        <end position="217"/>
    </location>
</feature>
<feature type="topological domain" description="Cytoplasmic" evidence="1">
    <location>
        <begin position="218"/>
        <end position="237"/>
    </location>
</feature>
<feature type="transmembrane region" description="Helical; Name=6" evidence="1">
    <location>
        <begin position="238"/>
        <end position="258"/>
    </location>
</feature>
<feature type="topological domain" description="Extracellular" evidence="1">
    <location>
        <begin position="259"/>
        <end position="271"/>
    </location>
</feature>
<feature type="transmembrane region" description="Helical; Name=7" evidence="1">
    <location>
        <begin position="272"/>
        <end position="292"/>
    </location>
</feature>
<feature type="topological domain" description="Cytoplasmic" evidence="1">
    <location>
        <begin position="293"/>
        <end position="311"/>
    </location>
</feature>
<feature type="glycosylation site" description="N-linked (GlcNAc...) asparagine" evidence="1">
    <location>
        <position position="5"/>
    </location>
</feature>
<feature type="disulfide bond" evidence="2">
    <location>
        <begin position="97"/>
        <end position="189"/>
    </location>
</feature>
<feature type="sequence conflict" description="In Ref. 6; CAA61822." evidence="3" ref="6">
    <original>G</original>
    <variation>S</variation>
    <location>
        <position position="204"/>
    </location>
</feature>
<proteinExistence type="evidence at transcript level"/>
<comment type="function">
    <text evidence="3">Odorant receptor (Potential). May be involved in taste perception.</text>
</comment>
<comment type="subcellular location">
    <subcellularLocation>
        <location evidence="3">Cell membrane</location>
        <topology evidence="1">Multi-pass membrane protein</topology>
    </subcellularLocation>
</comment>
<comment type="tissue specificity">
    <text>Expressed in the tongue and testis.</text>
</comment>
<comment type="similarity">
    <text evidence="2">Belongs to the G-protein coupled receptor 1 family.</text>
</comment>
<comment type="online information" name="Human Olfactory Receptor Data Exploratorium (HORDE)">
    <link uri="http://genome.weizmann.ac.il/horde/card/index/symbol:OR8B8"/>
</comment>